<reference key="1">
    <citation type="journal article" date="1998" name="Mol. Microbiol.">
        <title>The pha gene cluster of Rhizobium meliloti involved in pH adaptation and symbiosis encodes a novel type of K+ efflux system.</title>
        <authorList>
            <person name="Putnoky P."/>
            <person name="Kereszt A."/>
            <person name="Nakamura T."/>
            <person name="Endre G."/>
            <person name="Grosskopf E."/>
            <person name="Kiss P."/>
            <person name="Kondorosi A."/>
        </authorList>
    </citation>
    <scope>NUCLEOTIDE SEQUENCE [GENOMIC DNA]</scope>
    <source>
        <strain>41</strain>
    </source>
</reference>
<reference key="2">
    <citation type="journal article" date="2001" name="Proc. Natl. Acad. Sci. U.S.A.">
        <title>Analysis of the chromosome sequence of the legume symbiont Sinorhizobium meliloti strain 1021.</title>
        <authorList>
            <person name="Capela D."/>
            <person name="Barloy-Hubler F."/>
            <person name="Gouzy J."/>
            <person name="Bothe G."/>
            <person name="Ampe F."/>
            <person name="Batut J."/>
            <person name="Boistard P."/>
            <person name="Becker A."/>
            <person name="Boutry M."/>
            <person name="Cadieu E."/>
            <person name="Dreano S."/>
            <person name="Gloux S."/>
            <person name="Godrie T."/>
            <person name="Goffeau A."/>
            <person name="Kahn D."/>
            <person name="Kiss E."/>
            <person name="Lelaure V."/>
            <person name="Masuy D."/>
            <person name="Pohl T."/>
            <person name="Portetelle D."/>
            <person name="Puehler A."/>
            <person name="Purnelle B."/>
            <person name="Ramsperger U."/>
            <person name="Renard C."/>
            <person name="Thebault P."/>
            <person name="Vandenbol M."/>
            <person name="Weidner S."/>
            <person name="Galibert F."/>
        </authorList>
    </citation>
    <scope>NUCLEOTIDE SEQUENCE [LARGE SCALE GENOMIC DNA]</scope>
    <source>
        <strain>1021</strain>
    </source>
</reference>
<reference key="3">
    <citation type="journal article" date="2001" name="Science">
        <title>The composite genome of the legume symbiont Sinorhizobium meliloti.</title>
        <authorList>
            <person name="Galibert F."/>
            <person name="Finan T.M."/>
            <person name="Long S.R."/>
            <person name="Puehler A."/>
            <person name="Abola P."/>
            <person name="Ampe F."/>
            <person name="Barloy-Hubler F."/>
            <person name="Barnett M.J."/>
            <person name="Becker A."/>
            <person name="Boistard P."/>
            <person name="Bothe G."/>
            <person name="Boutry M."/>
            <person name="Bowser L."/>
            <person name="Buhrmester J."/>
            <person name="Cadieu E."/>
            <person name="Capela D."/>
            <person name="Chain P."/>
            <person name="Cowie A."/>
            <person name="Davis R.W."/>
            <person name="Dreano S."/>
            <person name="Federspiel N.A."/>
            <person name="Fisher R.F."/>
            <person name="Gloux S."/>
            <person name="Godrie T."/>
            <person name="Goffeau A."/>
            <person name="Golding B."/>
            <person name="Gouzy J."/>
            <person name="Gurjal M."/>
            <person name="Hernandez-Lucas I."/>
            <person name="Hong A."/>
            <person name="Huizar L."/>
            <person name="Hyman R.W."/>
            <person name="Jones T."/>
            <person name="Kahn D."/>
            <person name="Kahn M.L."/>
            <person name="Kalman S."/>
            <person name="Keating D.H."/>
            <person name="Kiss E."/>
            <person name="Komp C."/>
            <person name="Lelaure V."/>
            <person name="Masuy D."/>
            <person name="Palm C."/>
            <person name="Peck M.C."/>
            <person name="Pohl T.M."/>
            <person name="Portetelle D."/>
            <person name="Purnelle B."/>
            <person name="Ramsperger U."/>
            <person name="Surzycki R."/>
            <person name="Thebault P."/>
            <person name="Vandenbol M."/>
            <person name="Vorhoelter F.J."/>
            <person name="Weidner S."/>
            <person name="Wells D.H."/>
            <person name="Wong K."/>
            <person name="Yeh K.-C."/>
            <person name="Batut J."/>
        </authorList>
    </citation>
    <scope>NUCLEOTIDE SEQUENCE [LARGE SCALE GENOMIC DNA]</scope>
    <source>
        <strain>1021</strain>
    </source>
</reference>
<reference key="4">
    <citation type="submission" date="2002-01" db="EMBL/GenBank/DDBJ databases">
        <title>Sinorhizobium meliloti phaA gene segment.</title>
        <authorList>
            <person name="Watson R.J."/>
            <person name="Heys R."/>
        </authorList>
    </citation>
    <scope>NUCLEOTIDE SEQUENCE [GENOMIC DNA] OF 1-926</scope>
    <source>
        <strain>JJ1c10</strain>
    </source>
</reference>
<name>PHAAB_RHIME</name>
<protein>
    <recommendedName>
        <fullName>Probable K(+)/H(+) antiporter subunit A/B</fullName>
    </recommendedName>
    <alternativeName>
        <fullName>pH adaptation potassium efflux system protein A/B</fullName>
        <shortName>Pha system subunit A/B</shortName>
    </alternativeName>
</protein>
<evidence type="ECO:0000255" key="1"/>
<evidence type="ECO:0000256" key="2">
    <source>
        <dbReference type="SAM" id="MobiDB-lite"/>
    </source>
</evidence>
<evidence type="ECO:0000305" key="3"/>
<sequence>MTRPASVLAGPKSRPPIHSQGDKTIEYAEKLLSVFILVPFAGSLIAIFFPSDQRGAISWFAGAIALVCFLVTAGLYPYVASGGVLHYRIDWVPELGLNFTLRMDGFAWLFSALITAIGVLVALYARYYMAEEDPVPRFFALFLAFMGSMLGVVLSGNLILLAVFWELTSIVSFLLIGYWHHNAHARDGARMALTITGTGGLAMFVGLIIIGKIVGSYELDAVLASGDAIRNHPLYGTVLVLVLLGALTKSAQFPFHFWLPHAMAAPTPVSAYLHSATMVKAGVFLLVRFWPVMAGTEAWFWIVGLAGLTTLLLGAYFAIFQQDLKGLLAYSTISHLGLITVLLSLGSPLAAVAAVFHIVNHATFKASLFMAAGIIDHESGTRDIRRLGGLFHFMPITATLAMVASAAMAGVPLLNGFLSKEMFFAEAIETHLVNPLDTVTPYVATIAGMFAVTYSLRFIHGVFFGRPPADLPRKPHEPPRWMRAPLDFLVLACLVVGIIPAQTIGPFLHTAVLSVLREGTPDYSLSVWHGWNIPLIMSFVALSGGIGLYFLMRSYLATAVEGPPVFRLLQGQRIFERVLVTLSWKWARWLEQRLGTRRLQPQMRLLVFLALAAGASPLLLGNFELPPLVIRGIDPAFALLWAIGIACAIGSAYQAKFHRLASLVLLGGAGLVTCITFVWLSAPDLAVTQLLVEIVTTVLILLGLRWLPKRIEEPVAAEDISIRVRLRRLRDLLLAIGAGGGMMLIAYTVMTRPLPETIASYFLERAYREGGGTNVVNVILVDFRGFDTLGEIAVLCIVALTVFALLLRFRPQSDSLEAPEQQKVQNAFDDDHPDRAAGDSVAEYLFIPAVIMRWMFPVTGMLAAFLFLRGHDLPGGGFAAGIAMSIGFILQYMSGGTRWVEERLRIHPLRWMSIGLLVATATGVGSWFFGYPFLTSHAQYASLPVVGKFPLASAILFDLGVFSLVLGATVLILIALAHQSVRAPRAHAKAARSDKEAVR</sequence>
<proteinExistence type="inferred from homology"/>
<dbReference type="EMBL" id="X93358">
    <property type="protein sequence ID" value="CAA63734.1"/>
    <property type="status" value="ALT_FRAME"/>
    <property type="molecule type" value="Genomic_DNA"/>
</dbReference>
<dbReference type="EMBL" id="X93358">
    <property type="protein sequence ID" value="CAA63735.1"/>
    <property type="status" value="ALT_FRAME"/>
    <property type="molecule type" value="Genomic_DNA"/>
</dbReference>
<dbReference type="EMBL" id="AL591688">
    <property type="protein sequence ID" value="CAC47489.1"/>
    <property type="molecule type" value="Genomic_DNA"/>
</dbReference>
<dbReference type="EMBL" id="AF465791">
    <property type="protein sequence ID" value="AAL76258.1"/>
    <property type="molecule type" value="Genomic_DNA"/>
</dbReference>
<dbReference type="RefSeq" id="NP_387016.1">
    <property type="nucleotide sequence ID" value="NC_003047.1"/>
</dbReference>
<dbReference type="SMR" id="Q52978"/>
<dbReference type="TCDB" id="2.A.63.1.1">
    <property type="family name" value="the monovalent cation (k(+) or na(+)):proton antiporter-3 (cpa3) family"/>
</dbReference>
<dbReference type="EnsemblBacteria" id="CAC47489">
    <property type="protein sequence ID" value="CAC47489"/>
    <property type="gene ID" value="SMc03179"/>
</dbReference>
<dbReference type="KEGG" id="sme:SMc03179"/>
<dbReference type="PATRIC" id="fig|266834.11.peg.4431"/>
<dbReference type="eggNOG" id="COG1009">
    <property type="taxonomic scope" value="Bacteria"/>
</dbReference>
<dbReference type="eggNOG" id="COG2111">
    <property type="taxonomic scope" value="Bacteria"/>
</dbReference>
<dbReference type="HOGENOM" id="CLU_007100_2_0_5"/>
<dbReference type="OrthoDB" id="9811798at2"/>
<dbReference type="Proteomes" id="UP000001976">
    <property type="component" value="Chromosome"/>
</dbReference>
<dbReference type="GO" id="GO:0005886">
    <property type="term" value="C:plasma membrane"/>
    <property type="evidence" value="ECO:0007669"/>
    <property type="project" value="UniProtKB-SubCell"/>
</dbReference>
<dbReference type="GO" id="GO:0015297">
    <property type="term" value="F:antiporter activity"/>
    <property type="evidence" value="ECO:0007669"/>
    <property type="project" value="UniProtKB-KW"/>
</dbReference>
<dbReference type="GO" id="GO:0008324">
    <property type="term" value="F:monoatomic cation transmembrane transporter activity"/>
    <property type="evidence" value="ECO:0007669"/>
    <property type="project" value="InterPro"/>
</dbReference>
<dbReference type="GO" id="GO:0006813">
    <property type="term" value="P:potassium ion transport"/>
    <property type="evidence" value="ECO:0007669"/>
    <property type="project" value="UniProtKB-KW"/>
</dbReference>
<dbReference type="GO" id="GO:1902600">
    <property type="term" value="P:proton transmembrane transport"/>
    <property type="evidence" value="ECO:0007669"/>
    <property type="project" value="UniProtKB-KW"/>
</dbReference>
<dbReference type="InterPro" id="IPR050616">
    <property type="entry name" value="CPA3_Na-H_Antiporter_A"/>
</dbReference>
<dbReference type="InterPro" id="IPR005281">
    <property type="entry name" value="CPA3_sub_B"/>
</dbReference>
<dbReference type="InterPro" id="IPR007182">
    <property type="entry name" value="MnhB"/>
</dbReference>
<dbReference type="InterPro" id="IPR005663">
    <property type="entry name" value="MrpA/MnhA1/PhaAB"/>
</dbReference>
<dbReference type="InterPro" id="IPR025383">
    <property type="entry name" value="MrpA_C/MbhD"/>
</dbReference>
<dbReference type="InterPro" id="IPR046806">
    <property type="entry name" value="MrpA_C/MbhE"/>
</dbReference>
<dbReference type="InterPro" id="IPR001750">
    <property type="entry name" value="ND/Mrp_TM"/>
</dbReference>
<dbReference type="InterPro" id="IPR001516">
    <property type="entry name" value="Proton_antipo_N"/>
</dbReference>
<dbReference type="NCBIfam" id="TIGR00940">
    <property type="entry name" value="2a6301s01"/>
    <property type="match status" value="1"/>
</dbReference>
<dbReference type="NCBIfam" id="TIGR00943">
    <property type="entry name" value="2a6301s02"/>
    <property type="match status" value="1"/>
</dbReference>
<dbReference type="NCBIfam" id="NF009288">
    <property type="entry name" value="PRK12648.1"/>
    <property type="match status" value="1"/>
</dbReference>
<dbReference type="PANTHER" id="PTHR43373">
    <property type="entry name" value="NA(+)/H(+) ANTIPORTER SUBUNIT"/>
    <property type="match status" value="1"/>
</dbReference>
<dbReference type="PANTHER" id="PTHR43373:SF1">
    <property type="entry name" value="NA(+)_H(+) ANTIPORTER SUBUNIT A"/>
    <property type="match status" value="1"/>
</dbReference>
<dbReference type="Pfam" id="PF13244">
    <property type="entry name" value="MbhD"/>
    <property type="match status" value="1"/>
</dbReference>
<dbReference type="Pfam" id="PF20501">
    <property type="entry name" value="MbhE"/>
    <property type="match status" value="1"/>
</dbReference>
<dbReference type="Pfam" id="PF04039">
    <property type="entry name" value="MnhB"/>
    <property type="match status" value="1"/>
</dbReference>
<dbReference type="Pfam" id="PF00361">
    <property type="entry name" value="Proton_antipo_M"/>
    <property type="match status" value="1"/>
</dbReference>
<dbReference type="Pfam" id="PF00662">
    <property type="entry name" value="Proton_antipo_N"/>
    <property type="match status" value="1"/>
</dbReference>
<dbReference type="PRINTS" id="PR01434">
    <property type="entry name" value="NADHDHGNASE5"/>
</dbReference>
<organism>
    <name type="scientific">Rhizobium meliloti (strain 1021)</name>
    <name type="common">Ensifer meliloti</name>
    <name type="synonym">Sinorhizobium meliloti</name>
    <dbReference type="NCBI Taxonomy" id="266834"/>
    <lineage>
        <taxon>Bacteria</taxon>
        <taxon>Pseudomonadati</taxon>
        <taxon>Pseudomonadota</taxon>
        <taxon>Alphaproteobacteria</taxon>
        <taxon>Hyphomicrobiales</taxon>
        <taxon>Rhizobiaceae</taxon>
        <taxon>Sinorhizobium/Ensifer group</taxon>
        <taxon>Sinorhizobium</taxon>
    </lineage>
</organism>
<accession>Q52978</accession>
<accession>Q52979</accession>
<accession>Q8RTE9</accession>
<accession>Q92LV7</accession>
<comment type="function">
    <text>Part of a K(+) efflux system which is required for the adaptation of R.meliloti to alkaline pH as well as for the infection process during symbiotic nodule development.</text>
</comment>
<comment type="subunit">
    <text>May form a heterooligomeric complex that consists of six subunits: PhaAB, PhaC, PhaD, PhaE, PhaF and PhaG.</text>
</comment>
<comment type="subcellular location">
    <subcellularLocation>
        <location evidence="3">Cell membrane</location>
        <topology evidence="3">Multi-pass membrane protein</topology>
    </subcellularLocation>
</comment>
<comment type="similarity">
    <text evidence="3">In the N-terminal section; belongs to the CPA3 antiporters (TC 2.A.63) subunit A family.</text>
</comment>
<comment type="similarity">
    <text evidence="3">In the C-terminal section; belongs to the CPA3 antiporters (TC 2.A.63) subunit B family.</text>
</comment>
<comment type="sequence caution" evidence="3">
    <conflict type="frameshift">
        <sequence resource="EMBL-CDS" id="CAA63735"/>
    </conflict>
    <text>Produces two separate ORFs named phaA and phaB.</text>
</comment>
<keyword id="KW-0050">Antiport</keyword>
<keyword id="KW-1003">Cell membrane</keyword>
<keyword id="KW-0375">Hydrogen ion transport</keyword>
<keyword id="KW-0406">Ion transport</keyword>
<keyword id="KW-0472">Membrane</keyword>
<keyword id="KW-0630">Potassium</keyword>
<keyword id="KW-0633">Potassium transport</keyword>
<keyword id="KW-1185">Reference proteome</keyword>
<keyword id="KW-0812">Transmembrane</keyword>
<keyword id="KW-1133">Transmembrane helix</keyword>
<keyword id="KW-0813">Transport</keyword>
<gene>
    <name type="primary">phaAB</name>
    <name type="synonym">phaA</name>
    <name type="synonym">phaA1</name>
    <name type="synonym">phaB</name>
    <name type="ordered locus">R02910</name>
    <name type="ORF">SMc03179</name>
</gene>
<feature type="chain" id="PRO_0000217075" description="Probable K(+)/H(+) antiporter subunit A/B">
    <location>
        <begin position="1"/>
        <end position="999"/>
    </location>
</feature>
<feature type="transmembrane region" description="Helical" evidence="1">
    <location>
        <begin position="31"/>
        <end position="48"/>
    </location>
</feature>
<feature type="transmembrane region" description="Helical" evidence="1">
    <location>
        <begin position="63"/>
        <end position="85"/>
    </location>
</feature>
<feature type="transmembrane region" description="Helical" evidence="1">
    <location>
        <begin position="106"/>
        <end position="128"/>
    </location>
</feature>
<feature type="transmembrane region" description="Helical" evidence="1">
    <location>
        <begin position="138"/>
        <end position="160"/>
    </location>
</feature>
<feature type="transmembrane region" description="Helical" evidence="1">
    <location>
        <begin position="162"/>
        <end position="181"/>
    </location>
</feature>
<feature type="transmembrane region" description="Helical" evidence="1">
    <location>
        <begin position="191"/>
        <end position="213"/>
    </location>
</feature>
<feature type="transmembrane region" description="Helical" evidence="1">
    <location>
        <begin position="233"/>
        <end position="255"/>
    </location>
</feature>
<feature type="transmembrane region" description="Helical" evidence="1">
    <location>
        <begin position="270"/>
        <end position="292"/>
    </location>
</feature>
<feature type="transmembrane region" description="Helical" evidence="1">
    <location>
        <begin position="299"/>
        <end position="321"/>
    </location>
</feature>
<feature type="transmembrane region" description="Helical" evidence="1">
    <location>
        <begin position="336"/>
        <end position="358"/>
    </location>
</feature>
<feature type="transmembrane region" description="Helical" evidence="1">
    <location>
        <begin position="389"/>
        <end position="411"/>
    </location>
</feature>
<feature type="transmembrane region" description="Helical" evidence="1">
    <location>
        <begin position="442"/>
        <end position="464"/>
    </location>
</feature>
<feature type="transmembrane region" description="Helical" evidence="1">
    <location>
        <begin position="488"/>
        <end position="510"/>
    </location>
</feature>
<feature type="transmembrane region" description="Helical" evidence="1">
    <location>
        <begin position="530"/>
        <end position="552"/>
    </location>
</feature>
<feature type="transmembrane region" description="Helical" evidence="1">
    <location>
        <begin position="604"/>
        <end position="621"/>
    </location>
</feature>
<feature type="transmembrane region" description="Helical" evidence="1">
    <location>
        <begin position="636"/>
        <end position="653"/>
    </location>
</feature>
<feature type="transmembrane region" description="Helical" evidence="1">
    <location>
        <begin position="660"/>
        <end position="682"/>
    </location>
</feature>
<feature type="transmembrane region" description="Helical" evidence="1">
    <location>
        <begin position="686"/>
        <end position="708"/>
    </location>
</feature>
<feature type="transmembrane region" description="Helical" evidence="1">
    <location>
        <begin position="729"/>
        <end position="751"/>
    </location>
</feature>
<feature type="transmembrane region" description="Helical" evidence="1">
    <location>
        <begin position="788"/>
        <end position="807"/>
    </location>
</feature>
<feature type="transmembrane region" description="Helical" evidence="1">
    <location>
        <begin position="846"/>
        <end position="868"/>
    </location>
</feature>
<feature type="transmembrane region" description="Helical" evidence="1">
    <location>
        <begin position="878"/>
        <end position="900"/>
    </location>
</feature>
<feature type="transmembrane region" description="Helical" evidence="1">
    <location>
        <begin position="913"/>
        <end position="935"/>
    </location>
</feature>
<feature type="transmembrane region" description="Helical" evidence="1">
    <location>
        <begin position="955"/>
        <end position="977"/>
    </location>
</feature>
<feature type="region of interest" description="Disordered" evidence="2">
    <location>
        <begin position="1"/>
        <end position="20"/>
    </location>
</feature>
<feature type="sequence conflict" description="In Ref. 1; CAA63734." evidence="3" ref="1">
    <original>A</original>
    <variation>V</variation>
    <location>
        <position position="122"/>
    </location>
</feature>
<feature type="sequence conflict" description="In Ref. 1; CAA63734." evidence="3" ref="1">
    <original>G</original>
    <variation>A</variation>
    <location>
        <position position="188"/>
    </location>
</feature>